<keyword id="KW-0175">Coiled coil</keyword>
<keyword id="KW-0963">Cytoplasm</keyword>
<keyword id="KW-0967">Endosome</keyword>
<keyword id="KW-0458">Lysosome</keyword>
<keyword id="KW-0479">Metal-binding</keyword>
<keyword id="KW-1185">Reference proteome</keyword>
<keyword id="KW-0808">Transferase</keyword>
<keyword id="KW-0833">Ubl conjugation pathway</keyword>
<keyword id="KW-0862">Zinc</keyword>
<keyword id="KW-0863">Zinc-finger</keyword>
<evidence type="ECO:0000250" key="1">
    <source>
        <dbReference type="UniProtKB" id="Q9P0J7"/>
    </source>
</evidence>
<evidence type="ECO:0000255" key="2"/>
<evidence type="ECO:0000255" key="3">
    <source>
        <dbReference type="PROSITE-ProRule" id="PRU00042"/>
    </source>
</evidence>
<evidence type="ECO:0000255" key="4">
    <source>
        <dbReference type="PROSITE-ProRule" id="PRU00228"/>
    </source>
</evidence>
<evidence type="ECO:0000256" key="5">
    <source>
        <dbReference type="SAM" id="MobiDB-lite"/>
    </source>
</evidence>
<evidence type="ECO:0000305" key="6"/>
<proteinExistence type="evidence at transcript level"/>
<accession>Q7T321</accession>
<dbReference type="EC" id="2.3.2.27" evidence="1"/>
<dbReference type="EMBL" id="AY394941">
    <property type="protein sequence ID" value="AAQ94568.1"/>
    <property type="molecule type" value="mRNA"/>
</dbReference>
<dbReference type="EMBL" id="BX294395">
    <property type="protein sequence ID" value="CAM56401.1"/>
    <property type="molecule type" value="Genomic_DNA"/>
</dbReference>
<dbReference type="EMBL" id="BC053288">
    <property type="protein sequence ID" value="AAH53288.1"/>
    <property type="molecule type" value="mRNA"/>
</dbReference>
<dbReference type="RefSeq" id="NP_957246.1">
    <property type="nucleotide sequence ID" value="NM_200952.2"/>
</dbReference>
<dbReference type="SMR" id="Q7T321"/>
<dbReference type="FunCoup" id="Q7T321">
    <property type="interactions" value="1392"/>
</dbReference>
<dbReference type="STRING" id="7955.ENSDARP00000088195"/>
<dbReference type="PaxDb" id="7955-ENSDARP00000088195"/>
<dbReference type="Ensembl" id="ENSDART00000097424">
    <property type="protein sequence ID" value="ENSDARP00000088195"/>
    <property type="gene ID" value="ENSDARG00000067656"/>
</dbReference>
<dbReference type="GeneID" id="393927"/>
<dbReference type="KEGG" id="dre:393927"/>
<dbReference type="AGR" id="ZFIN:ZDB-GENE-040426-1383"/>
<dbReference type="CTD" id="56888"/>
<dbReference type="ZFIN" id="ZDB-GENE-040426-1383">
    <property type="gene designation" value="kcmf1"/>
</dbReference>
<dbReference type="eggNOG" id="KOG1280">
    <property type="taxonomic scope" value="Eukaryota"/>
</dbReference>
<dbReference type="HOGENOM" id="CLU_032080_1_1_1"/>
<dbReference type="InParanoid" id="Q7T321"/>
<dbReference type="OMA" id="RQVCSPI"/>
<dbReference type="OrthoDB" id="7873042at2759"/>
<dbReference type="PhylomeDB" id="Q7T321"/>
<dbReference type="TreeFam" id="TF318128"/>
<dbReference type="Reactome" id="R-DRE-6798695">
    <property type="pathway name" value="Neutrophil degranulation"/>
</dbReference>
<dbReference type="UniPathway" id="UPA00143"/>
<dbReference type="PRO" id="PR:Q7T321"/>
<dbReference type="Proteomes" id="UP000000437">
    <property type="component" value="Chromosome 5"/>
</dbReference>
<dbReference type="Bgee" id="ENSDARG00000067656">
    <property type="expression patterns" value="Expressed in muscle tissue and 27 other cell types or tissues"/>
</dbReference>
<dbReference type="GO" id="GO:0005770">
    <property type="term" value="C:late endosome"/>
    <property type="evidence" value="ECO:0007669"/>
    <property type="project" value="UniProtKB-SubCell"/>
</dbReference>
<dbReference type="GO" id="GO:0005764">
    <property type="term" value="C:lysosome"/>
    <property type="evidence" value="ECO:0007669"/>
    <property type="project" value="UniProtKB-SubCell"/>
</dbReference>
<dbReference type="GO" id="GO:0005886">
    <property type="term" value="C:plasma membrane"/>
    <property type="evidence" value="ECO:0000318"/>
    <property type="project" value="GO_Central"/>
</dbReference>
<dbReference type="GO" id="GO:0045202">
    <property type="term" value="C:synapse"/>
    <property type="evidence" value="ECO:0007669"/>
    <property type="project" value="GOC"/>
</dbReference>
<dbReference type="GO" id="GO:0016740">
    <property type="term" value="F:transferase activity"/>
    <property type="evidence" value="ECO:0007669"/>
    <property type="project" value="UniProtKB-KW"/>
</dbReference>
<dbReference type="GO" id="GO:0008270">
    <property type="term" value="F:zinc ion binding"/>
    <property type="evidence" value="ECO:0007669"/>
    <property type="project" value="UniProtKB-KW"/>
</dbReference>
<dbReference type="GO" id="GO:0141191">
    <property type="term" value="P:negative regulation of HRI-mediated signaling"/>
    <property type="evidence" value="ECO:0000250"/>
    <property type="project" value="UniProtKB"/>
</dbReference>
<dbReference type="GO" id="GO:0070534">
    <property type="term" value="P:protein K63-linked ubiquitination"/>
    <property type="evidence" value="ECO:0000250"/>
    <property type="project" value="UniProtKB"/>
</dbReference>
<dbReference type="GO" id="GO:0099536">
    <property type="term" value="P:synaptic signaling"/>
    <property type="evidence" value="ECO:0000318"/>
    <property type="project" value="GO_Central"/>
</dbReference>
<dbReference type="CDD" id="cd02338">
    <property type="entry name" value="ZZ_PCMF_like"/>
    <property type="match status" value="1"/>
</dbReference>
<dbReference type="Gene3D" id="3.30.60.90">
    <property type="match status" value="1"/>
</dbReference>
<dbReference type="InterPro" id="IPR008598">
    <property type="entry name" value="Di19_Zn-bd"/>
</dbReference>
<dbReference type="InterPro" id="IPR050774">
    <property type="entry name" value="KCMF1/Dystrophin"/>
</dbReference>
<dbReference type="InterPro" id="IPR013087">
    <property type="entry name" value="Znf_C2H2_type"/>
</dbReference>
<dbReference type="InterPro" id="IPR000433">
    <property type="entry name" value="Znf_ZZ"/>
</dbReference>
<dbReference type="InterPro" id="IPR043145">
    <property type="entry name" value="Znf_ZZ_sf"/>
</dbReference>
<dbReference type="PANTHER" id="PTHR12268">
    <property type="entry name" value="E3 UBIQUITIN-PROTEIN LIGASE KCMF1"/>
    <property type="match status" value="1"/>
</dbReference>
<dbReference type="PANTHER" id="PTHR12268:SF13">
    <property type="entry name" value="E3 UBIQUITIN-PROTEIN LIGASE KCMF1"/>
    <property type="match status" value="1"/>
</dbReference>
<dbReference type="Pfam" id="PF05605">
    <property type="entry name" value="zf-Di19"/>
    <property type="match status" value="1"/>
</dbReference>
<dbReference type="Pfam" id="PF00569">
    <property type="entry name" value="ZZ"/>
    <property type="match status" value="1"/>
</dbReference>
<dbReference type="SMART" id="SM00355">
    <property type="entry name" value="ZnF_C2H2"/>
    <property type="match status" value="1"/>
</dbReference>
<dbReference type="SMART" id="SM00291">
    <property type="entry name" value="ZnF_ZZ"/>
    <property type="match status" value="1"/>
</dbReference>
<dbReference type="SUPFAM" id="SSF57850">
    <property type="entry name" value="RING/U-box"/>
    <property type="match status" value="1"/>
</dbReference>
<dbReference type="PROSITE" id="PS01357">
    <property type="entry name" value="ZF_ZZ_1"/>
    <property type="match status" value="1"/>
</dbReference>
<dbReference type="PROSITE" id="PS50135">
    <property type="entry name" value="ZF_ZZ_2"/>
    <property type="match status" value="1"/>
</dbReference>
<dbReference type="PROSITE" id="PS50157">
    <property type="entry name" value="ZINC_FINGER_C2H2_2"/>
    <property type="match status" value="1"/>
</dbReference>
<name>KCMF1_DANRE</name>
<protein>
    <recommendedName>
        <fullName evidence="6">E3 ubiquitin-protein ligase KCMF1</fullName>
        <ecNumber evidence="1">2.3.2.27</ecNumber>
    </recommendedName>
</protein>
<reference key="1">
    <citation type="journal article" date="2004" name="Proc. Natl. Acad. Sci. U.S.A.">
        <title>Hematopoietic gene expression profile in zebrafish kidney marrow.</title>
        <authorList>
            <person name="Song H.-D."/>
            <person name="Sun X.-J."/>
            <person name="Deng M."/>
            <person name="Zhang G.-W."/>
            <person name="Zhou Y."/>
            <person name="Wu X.-Y."/>
            <person name="Sheng Y."/>
            <person name="Chen Y."/>
            <person name="Ruan Z."/>
            <person name="Jiang C.-L."/>
            <person name="Fan H.-Y."/>
            <person name="Zon L.I."/>
            <person name="Kanki J.P."/>
            <person name="Liu T.X."/>
            <person name="Look A.T."/>
            <person name="Chen Z."/>
        </authorList>
    </citation>
    <scope>NUCLEOTIDE SEQUENCE [LARGE SCALE MRNA]</scope>
    <source>
        <tissue>Kidney marrow</tissue>
    </source>
</reference>
<reference key="2">
    <citation type="journal article" date="2013" name="Nature">
        <title>The zebrafish reference genome sequence and its relationship to the human genome.</title>
        <authorList>
            <person name="Howe K."/>
            <person name="Clark M.D."/>
            <person name="Torroja C.F."/>
            <person name="Torrance J."/>
            <person name="Berthelot C."/>
            <person name="Muffato M."/>
            <person name="Collins J.E."/>
            <person name="Humphray S."/>
            <person name="McLaren K."/>
            <person name="Matthews L."/>
            <person name="McLaren S."/>
            <person name="Sealy I."/>
            <person name="Caccamo M."/>
            <person name="Churcher C."/>
            <person name="Scott C."/>
            <person name="Barrett J.C."/>
            <person name="Koch R."/>
            <person name="Rauch G.J."/>
            <person name="White S."/>
            <person name="Chow W."/>
            <person name="Kilian B."/>
            <person name="Quintais L.T."/>
            <person name="Guerra-Assuncao J.A."/>
            <person name="Zhou Y."/>
            <person name="Gu Y."/>
            <person name="Yen J."/>
            <person name="Vogel J.H."/>
            <person name="Eyre T."/>
            <person name="Redmond S."/>
            <person name="Banerjee R."/>
            <person name="Chi J."/>
            <person name="Fu B."/>
            <person name="Langley E."/>
            <person name="Maguire S.F."/>
            <person name="Laird G.K."/>
            <person name="Lloyd D."/>
            <person name="Kenyon E."/>
            <person name="Donaldson S."/>
            <person name="Sehra H."/>
            <person name="Almeida-King J."/>
            <person name="Loveland J."/>
            <person name="Trevanion S."/>
            <person name="Jones M."/>
            <person name="Quail M."/>
            <person name="Willey D."/>
            <person name="Hunt A."/>
            <person name="Burton J."/>
            <person name="Sims S."/>
            <person name="McLay K."/>
            <person name="Plumb B."/>
            <person name="Davis J."/>
            <person name="Clee C."/>
            <person name="Oliver K."/>
            <person name="Clark R."/>
            <person name="Riddle C."/>
            <person name="Elliot D."/>
            <person name="Threadgold G."/>
            <person name="Harden G."/>
            <person name="Ware D."/>
            <person name="Begum S."/>
            <person name="Mortimore B."/>
            <person name="Kerry G."/>
            <person name="Heath P."/>
            <person name="Phillimore B."/>
            <person name="Tracey A."/>
            <person name="Corby N."/>
            <person name="Dunn M."/>
            <person name="Johnson C."/>
            <person name="Wood J."/>
            <person name="Clark S."/>
            <person name="Pelan S."/>
            <person name="Griffiths G."/>
            <person name="Smith M."/>
            <person name="Glithero R."/>
            <person name="Howden P."/>
            <person name="Barker N."/>
            <person name="Lloyd C."/>
            <person name="Stevens C."/>
            <person name="Harley J."/>
            <person name="Holt K."/>
            <person name="Panagiotidis G."/>
            <person name="Lovell J."/>
            <person name="Beasley H."/>
            <person name="Henderson C."/>
            <person name="Gordon D."/>
            <person name="Auger K."/>
            <person name="Wright D."/>
            <person name="Collins J."/>
            <person name="Raisen C."/>
            <person name="Dyer L."/>
            <person name="Leung K."/>
            <person name="Robertson L."/>
            <person name="Ambridge K."/>
            <person name="Leongamornlert D."/>
            <person name="McGuire S."/>
            <person name="Gilderthorp R."/>
            <person name="Griffiths C."/>
            <person name="Manthravadi D."/>
            <person name="Nichol S."/>
            <person name="Barker G."/>
            <person name="Whitehead S."/>
            <person name="Kay M."/>
            <person name="Brown J."/>
            <person name="Murnane C."/>
            <person name="Gray E."/>
            <person name="Humphries M."/>
            <person name="Sycamore N."/>
            <person name="Barker D."/>
            <person name="Saunders D."/>
            <person name="Wallis J."/>
            <person name="Babbage A."/>
            <person name="Hammond S."/>
            <person name="Mashreghi-Mohammadi M."/>
            <person name="Barr L."/>
            <person name="Martin S."/>
            <person name="Wray P."/>
            <person name="Ellington A."/>
            <person name="Matthews N."/>
            <person name="Ellwood M."/>
            <person name="Woodmansey R."/>
            <person name="Clark G."/>
            <person name="Cooper J."/>
            <person name="Tromans A."/>
            <person name="Grafham D."/>
            <person name="Skuce C."/>
            <person name="Pandian R."/>
            <person name="Andrews R."/>
            <person name="Harrison E."/>
            <person name="Kimberley A."/>
            <person name="Garnett J."/>
            <person name="Fosker N."/>
            <person name="Hall R."/>
            <person name="Garner P."/>
            <person name="Kelly D."/>
            <person name="Bird C."/>
            <person name="Palmer S."/>
            <person name="Gehring I."/>
            <person name="Berger A."/>
            <person name="Dooley C.M."/>
            <person name="Ersan-Urun Z."/>
            <person name="Eser C."/>
            <person name="Geiger H."/>
            <person name="Geisler M."/>
            <person name="Karotki L."/>
            <person name="Kirn A."/>
            <person name="Konantz J."/>
            <person name="Konantz M."/>
            <person name="Oberlander M."/>
            <person name="Rudolph-Geiger S."/>
            <person name="Teucke M."/>
            <person name="Lanz C."/>
            <person name="Raddatz G."/>
            <person name="Osoegawa K."/>
            <person name="Zhu B."/>
            <person name="Rapp A."/>
            <person name="Widaa S."/>
            <person name="Langford C."/>
            <person name="Yang F."/>
            <person name="Schuster S.C."/>
            <person name="Carter N.P."/>
            <person name="Harrow J."/>
            <person name="Ning Z."/>
            <person name="Herrero J."/>
            <person name="Searle S.M."/>
            <person name="Enright A."/>
            <person name="Geisler R."/>
            <person name="Plasterk R.H."/>
            <person name="Lee C."/>
            <person name="Westerfield M."/>
            <person name="de Jong P.J."/>
            <person name="Zon L.I."/>
            <person name="Postlethwait J.H."/>
            <person name="Nusslein-Volhard C."/>
            <person name="Hubbard T.J."/>
            <person name="Roest Crollius H."/>
            <person name="Rogers J."/>
            <person name="Stemple D.L."/>
        </authorList>
    </citation>
    <scope>NUCLEOTIDE SEQUENCE [LARGE SCALE GENOMIC DNA]</scope>
    <source>
        <strain>Tuebingen</strain>
    </source>
</reference>
<reference key="3">
    <citation type="submission" date="2003-06" db="EMBL/GenBank/DDBJ databases">
        <authorList>
            <consortium name="NIH - Zebrafish Gene Collection (ZGC) project"/>
        </authorList>
    </citation>
    <scope>NUCLEOTIDE SEQUENCE [LARGE SCALE MRNA]</scope>
    <source>
        <tissue>Kidney</tissue>
    </source>
</reference>
<feature type="chain" id="PRO_0000349221" description="E3 ubiquitin-protein ligase KCMF1">
    <location>
        <begin position="1"/>
        <end position="383"/>
    </location>
</feature>
<feature type="zinc finger region" description="ZZ-type" evidence="4">
    <location>
        <begin position="4"/>
        <end position="60"/>
    </location>
</feature>
<feature type="zinc finger region" description="C2H2-type" evidence="3">
    <location>
        <begin position="78"/>
        <end position="101"/>
    </location>
</feature>
<feature type="region of interest" description="Disordered" evidence="5">
    <location>
        <begin position="141"/>
        <end position="194"/>
    </location>
</feature>
<feature type="region of interest" description="Disordered" evidence="5">
    <location>
        <begin position="242"/>
        <end position="289"/>
    </location>
</feature>
<feature type="coiled-coil region" evidence="2">
    <location>
        <begin position="224"/>
        <end position="261"/>
    </location>
</feature>
<feature type="compositionally biased region" description="Low complexity" evidence="5">
    <location>
        <begin position="175"/>
        <end position="192"/>
    </location>
</feature>
<feature type="compositionally biased region" description="Low complexity" evidence="5">
    <location>
        <begin position="260"/>
        <end position="279"/>
    </location>
</feature>
<feature type="compositionally biased region" description="Polar residues" evidence="5">
    <location>
        <begin position="280"/>
        <end position="289"/>
    </location>
</feature>
<feature type="binding site" evidence="4">
    <location>
        <position position="9"/>
    </location>
    <ligand>
        <name>Zn(2+)</name>
        <dbReference type="ChEBI" id="CHEBI:29105"/>
        <label>1</label>
    </ligand>
</feature>
<feature type="binding site" evidence="4">
    <location>
        <position position="12"/>
    </location>
    <ligand>
        <name>Zn(2+)</name>
        <dbReference type="ChEBI" id="CHEBI:29105"/>
        <label>1</label>
    </ligand>
</feature>
<feature type="binding site" evidence="4">
    <location>
        <position position="24"/>
    </location>
    <ligand>
        <name>Zn(2+)</name>
        <dbReference type="ChEBI" id="CHEBI:29105"/>
        <label>2</label>
    </ligand>
</feature>
<feature type="binding site" evidence="4">
    <location>
        <position position="27"/>
    </location>
    <ligand>
        <name>Zn(2+)</name>
        <dbReference type="ChEBI" id="CHEBI:29105"/>
        <label>2</label>
    </ligand>
</feature>
<feature type="binding site" evidence="4">
    <location>
        <position position="33"/>
    </location>
    <ligand>
        <name>Zn(2+)</name>
        <dbReference type="ChEBI" id="CHEBI:29105"/>
        <label>1</label>
    </ligand>
</feature>
<feature type="binding site" evidence="4">
    <location>
        <position position="36"/>
    </location>
    <ligand>
        <name>Zn(2+)</name>
        <dbReference type="ChEBI" id="CHEBI:29105"/>
        <label>1</label>
    </ligand>
</feature>
<feature type="binding site" evidence="4">
    <location>
        <position position="46"/>
    </location>
    <ligand>
        <name>Zn(2+)</name>
        <dbReference type="ChEBI" id="CHEBI:29105"/>
        <label>2</label>
    </ligand>
</feature>
<feature type="binding site" evidence="4">
    <location>
        <position position="50"/>
    </location>
    <ligand>
        <name>Zn(2+)</name>
        <dbReference type="ChEBI" id="CHEBI:29105"/>
        <label>2</label>
    </ligand>
</feature>
<comment type="function">
    <text evidence="1">E3 ubiquitin-protein ligase which accepts ubiquitin from an E2 ubiquitin-conjugating enzyme and then transfers it to targeted substrates, promoting their degradation by the proteasome. Together with UBR4, component of the N-end rule pathway: ubiquitinates proteins bearing specific N-terminal residues that are destabilizing according to the N-end rule, leading to their degradation. Does not ubiquitinate proteins that are acetylated at the N-terminus. Together with ubr4, part of a protein quality control pathway that catalyzes ubiquitination and degradation of proteins that have been oxidized in response to reactive oxygen species (ROS): recognizes proteins with an Arg-CysO3(H) degron at the N-terminus, and mediates assembly of heterotypic 'Lys-63'-/'Lys-27'-linked branched ubiquitin chains on oxidized proteins, leading to their degradation by autophagy. Catalytic component of the SIFI complex, a multiprotein complex required to inhibit the mitochondrial stress response after a specific stress event has been resolved: ubiquitinates and degrades (1) components of the HRI-mediated signaling of the integrated stress response, such as dele1 and eif2ak1/hri, as well as (2) unimported mitochondrial precursors. Within the SIFI complex, ubr4 initiates ubiquitin chain that are further elongated or branched by kcmf1.</text>
</comment>
<comment type="catalytic activity">
    <reaction evidence="1">
        <text>S-ubiquitinyl-[E2 ubiquitin-conjugating enzyme]-L-cysteine + [acceptor protein]-L-lysine = [E2 ubiquitin-conjugating enzyme]-L-cysteine + N(6)-ubiquitinyl-[acceptor protein]-L-lysine.</text>
        <dbReference type="EC" id="2.3.2.27"/>
    </reaction>
</comment>
<comment type="pathway">
    <text evidence="1">Protein modification; protein ubiquitination.</text>
</comment>
<comment type="subunit">
    <text evidence="1">Component of the SIFI complex, composed of kcmf1, ubr4 and calmodulin.</text>
</comment>
<comment type="subcellular location">
    <subcellularLocation>
        <location evidence="1">Cytoplasm</location>
    </subcellularLocation>
    <subcellularLocation>
        <location evidence="1">Late endosome</location>
    </subcellularLocation>
    <subcellularLocation>
        <location evidence="1">Lysosome</location>
    </subcellularLocation>
</comment>
<comment type="similarity">
    <text evidence="6">Belongs to the KCMF1 family.</text>
</comment>
<sequence length="383" mass="42048">MSRHEGVSCDACLKGNFRGRRYKCLICYDYDLCASCYESGATTTRHTTEHPMQCILTRVDFDLYYGGEAFSVEQPQSFTCPYCGKMGYTETSLQEHVTSEHAETSTEVICPICAALPGGDPNHVTDDFAAHLTLEHRAPRDLDESSGVRHVRRMFHPGRGLGGPRARRTNMHFTSSSTGGLSSSQSSSYSPSNREAMDPIAELLSQLSGVRRSAGGQLNSSGPSASQLQQLQMQLQLERQQAQAARQQLETARNATRQRSNPSNISASIPPPSTATNTAMTESNPLASHSSQFLLTRLNEPKMSEAERQALESERADRSLFVQELLLSTLMREESSSSDEDERRDFADFGAMGCVDIMPLDVALESLNLKESSTGKEPPPPPL</sequence>
<organism>
    <name type="scientific">Danio rerio</name>
    <name type="common">Zebrafish</name>
    <name type="synonym">Brachydanio rerio</name>
    <dbReference type="NCBI Taxonomy" id="7955"/>
    <lineage>
        <taxon>Eukaryota</taxon>
        <taxon>Metazoa</taxon>
        <taxon>Chordata</taxon>
        <taxon>Craniata</taxon>
        <taxon>Vertebrata</taxon>
        <taxon>Euteleostomi</taxon>
        <taxon>Actinopterygii</taxon>
        <taxon>Neopterygii</taxon>
        <taxon>Teleostei</taxon>
        <taxon>Ostariophysi</taxon>
        <taxon>Cypriniformes</taxon>
        <taxon>Danionidae</taxon>
        <taxon>Danioninae</taxon>
        <taxon>Danio</taxon>
    </lineage>
</organism>
<gene>
    <name type="primary">kcmf1</name>
    <name type="ORF">si:ch211-220b11.7</name>
</gene>